<protein>
    <recommendedName>
        <fullName>ER membrane protein complex subunit 6</fullName>
    </recommendedName>
</protein>
<gene>
    <name type="primary">EMC6</name>
    <name type="ordered locus">YLL014W</name>
    <name type="ORF">L1321</name>
</gene>
<keyword id="KW-0002">3D-structure</keyword>
<keyword id="KW-0256">Endoplasmic reticulum</keyword>
<keyword id="KW-0472">Membrane</keyword>
<keyword id="KW-1185">Reference proteome</keyword>
<keyword id="KW-0812">Transmembrane</keyword>
<keyword id="KW-1133">Transmembrane helix</keyword>
<proteinExistence type="evidence at protein level"/>
<sequence length="108" mass="12404">MSSNEEVFTQINATANVVDNKKRLLFVQDSSALVLGLVAGFLQIESVHGFIWFLILYNLINVIYIVWICQLQPGKFYQSPLHDIFFESFFREITGFVMAWTFGYALIG</sequence>
<name>EMC6_YEAST</name>
<reference key="1">
    <citation type="journal article" date="1996" name="Yeast">
        <title>Sequence analysis of the CEN12 region of Saccharomyces cerevisiae on a 43.7 kb fragment of chromosome XII including an open reading frame homologous to the human cystic fibrosis transmembrane conductance regulator protein CFTR.</title>
        <authorList>
            <person name="Miosga T."/>
            <person name="Zimmermann F.K."/>
        </authorList>
    </citation>
    <scope>NUCLEOTIDE SEQUENCE [GENOMIC DNA]</scope>
    <source>
        <strain>ATCC 90840 / EAY235 / FY23</strain>
    </source>
</reference>
<reference key="2">
    <citation type="journal article" date="1997" name="Yeast">
        <title>The sequence of 32kb on the left arm of yeast chromosome XII reveals six known genes, a new member of the seripauperins family and a new ABC transporter homologous to the human multidrug resistance protein.</title>
        <authorList>
            <person name="Purnelle B."/>
            <person name="Goffeau A."/>
        </authorList>
    </citation>
    <scope>NUCLEOTIDE SEQUENCE [GENOMIC DNA]</scope>
    <source>
        <strain>ATCC 204508 / S288c</strain>
    </source>
</reference>
<reference key="3">
    <citation type="journal article" date="1997" name="Nature">
        <title>The nucleotide sequence of Saccharomyces cerevisiae chromosome XII.</title>
        <authorList>
            <person name="Johnston M."/>
            <person name="Hillier L.W."/>
            <person name="Riles L."/>
            <person name="Albermann K."/>
            <person name="Andre B."/>
            <person name="Ansorge W."/>
            <person name="Benes V."/>
            <person name="Brueckner M."/>
            <person name="Delius H."/>
            <person name="Dubois E."/>
            <person name="Duesterhoeft A."/>
            <person name="Entian K.-D."/>
            <person name="Floeth M."/>
            <person name="Goffeau A."/>
            <person name="Hebling U."/>
            <person name="Heumann K."/>
            <person name="Heuss-Neitzel D."/>
            <person name="Hilbert H."/>
            <person name="Hilger F."/>
            <person name="Kleine K."/>
            <person name="Koetter P."/>
            <person name="Louis E.J."/>
            <person name="Messenguy F."/>
            <person name="Mewes H.-W."/>
            <person name="Miosga T."/>
            <person name="Moestl D."/>
            <person name="Mueller-Auer S."/>
            <person name="Nentwich U."/>
            <person name="Obermaier B."/>
            <person name="Piravandi E."/>
            <person name="Pohl T.M."/>
            <person name="Portetelle D."/>
            <person name="Purnelle B."/>
            <person name="Rechmann S."/>
            <person name="Rieger M."/>
            <person name="Rinke M."/>
            <person name="Rose M."/>
            <person name="Scharfe M."/>
            <person name="Scherens B."/>
            <person name="Scholler P."/>
            <person name="Schwager C."/>
            <person name="Schwarz S."/>
            <person name="Underwood A.P."/>
            <person name="Urrestarazu L.A."/>
            <person name="Vandenbol M."/>
            <person name="Verhasselt P."/>
            <person name="Vierendeels F."/>
            <person name="Voet M."/>
            <person name="Volckaert G."/>
            <person name="Voss H."/>
            <person name="Wambutt R."/>
            <person name="Wedler E."/>
            <person name="Wedler H."/>
            <person name="Zimmermann F.K."/>
            <person name="Zollner A."/>
            <person name="Hani J."/>
            <person name="Hoheisel J.D."/>
        </authorList>
    </citation>
    <scope>NUCLEOTIDE SEQUENCE [LARGE SCALE GENOMIC DNA]</scope>
    <source>
        <strain>ATCC 204508 / S288c</strain>
    </source>
</reference>
<reference key="4">
    <citation type="journal article" date="2014" name="G3 (Bethesda)">
        <title>The reference genome sequence of Saccharomyces cerevisiae: Then and now.</title>
        <authorList>
            <person name="Engel S.R."/>
            <person name="Dietrich F.S."/>
            <person name="Fisk D.G."/>
            <person name="Binkley G."/>
            <person name="Balakrishnan R."/>
            <person name="Costanzo M.C."/>
            <person name="Dwight S.S."/>
            <person name="Hitz B.C."/>
            <person name="Karra K."/>
            <person name="Nash R.S."/>
            <person name="Weng S."/>
            <person name="Wong E.D."/>
            <person name="Lloyd P."/>
            <person name="Skrzypek M.S."/>
            <person name="Miyasato S.R."/>
            <person name="Simison M."/>
            <person name="Cherry J.M."/>
        </authorList>
    </citation>
    <scope>GENOME REANNOTATION</scope>
    <source>
        <strain>ATCC 204508 / S288c</strain>
    </source>
</reference>
<reference key="5">
    <citation type="journal article" date="2007" name="Genome Res.">
        <title>Approaching a complete repository of sequence-verified protein-encoding clones for Saccharomyces cerevisiae.</title>
        <authorList>
            <person name="Hu Y."/>
            <person name="Rolfs A."/>
            <person name="Bhullar B."/>
            <person name="Murthy T.V.S."/>
            <person name="Zhu C."/>
            <person name="Berger M.F."/>
            <person name="Camargo A.A."/>
            <person name="Kelley F."/>
            <person name="McCarron S."/>
            <person name="Jepson D."/>
            <person name="Richardson A."/>
            <person name="Raphael J."/>
            <person name="Moreira D."/>
            <person name="Taycher E."/>
            <person name="Zuo D."/>
            <person name="Mohr S."/>
            <person name="Kane M.F."/>
            <person name="Williamson J."/>
            <person name="Simpson A.J.G."/>
            <person name="Bulyk M.L."/>
            <person name="Harlow E."/>
            <person name="Marsischky G."/>
            <person name="Kolodner R.D."/>
            <person name="LaBaer J."/>
        </authorList>
    </citation>
    <scope>NUCLEOTIDE SEQUENCE [GENOMIC DNA]</scope>
    <source>
        <strain>ATCC 204508 / S288c</strain>
    </source>
</reference>
<reference key="6">
    <citation type="journal article" date="2003" name="Nature">
        <title>Global analysis of protein localization in budding yeast.</title>
        <authorList>
            <person name="Huh W.-K."/>
            <person name="Falvo J.V."/>
            <person name="Gerke L.C."/>
            <person name="Carroll A.S."/>
            <person name="Howson R.W."/>
            <person name="Weissman J.S."/>
            <person name="O'Shea E.K."/>
        </authorList>
    </citation>
    <scope>SUBCELLULAR LOCATION [LARGE SCALE ANALYSIS]</scope>
</reference>
<reference key="7">
    <citation type="journal article" date="2009" name="Science">
        <title>Comprehensive characterization of genes required for protein folding in the endoplasmic reticulum.</title>
        <authorList>
            <person name="Jonikas M.C."/>
            <person name="Collins S.R."/>
            <person name="Denic V."/>
            <person name="Oh E."/>
            <person name="Quan E.M."/>
            <person name="Schmid V."/>
            <person name="Weibezahn J."/>
            <person name="Schwappach B."/>
            <person name="Walter P."/>
            <person name="Weissman J.S."/>
            <person name="Schuldiner M."/>
        </authorList>
    </citation>
    <scope>IDENTIFICATION IN EMC COMPLEX</scope>
</reference>
<reference key="8">
    <citation type="journal article" date="2018" name="Elife">
        <title>The ER membrane protein complex interacts cotranslationally to enable biogenesis of multipass membrane proteins.</title>
        <authorList>
            <person name="Shurtleff M.J."/>
            <person name="Itzhak D.N."/>
            <person name="Hussmann J.A."/>
            <person name="Schirle Oakdale N.T."/>
            <person name="Costa E.A."/>
            <person name="Jonikas M."/>
            <person name="Weibezahn J."/>
            <person name="Popova K.D."/>
            <person name="Jan C.H."/>
            <person name="Sinitcyn P."/>
            <person name="Vembar S.S."/>
            <person name="Hernandez H."/>
            <person name="Cox J."/>
            <person name="Burlingame A.L."/>
            <person name="Brodsky J.L."/>
            <person name="Frost A."/>
            <person name="Borner G.H."/>
            <person name="Weissman J.S."/>
        </authorList>
    </citation>
    <scope>FUNCTION</scope>
    <scope>SUBUNIT</scope>
</reference>
<dbReference type="EMBL" id="X91488">
    <property type="protein sequence ID" value="CAA62778.1"/>
    <property type="molecule type" value="Genomic_DNA"/>
</dbReference>
<dbReference type="EMBL" id="X97560">
    <property type="protein sequence ID" value="CAA66163.1"/>
    <property type="molecule type" value="Genomic_DNA"/>
</dbReference>
<dbReference type="EMBL" id="Z73119">
    <property type="protein sequence ID" value="CAA97459.1"/>
    <property type="molecule type" value="Genomic_DNA"/>
</dbReference>
<dbReference type="EMBL" id="AY557926">
    <property type="protein sequence ID" value="AAS56252.1"/>
    <property type="molecule type" value="Genomic_DNA"/>
</dbReference>
<dbReference type="EMBL" id="BK006945">
    <property type="protein sequence ID" value="DAA09304.1"/>
    <property type="molecule type" value="Genomic_DNA"/>
</dbReference>
<dbReference type="PIR" id="S64756">
    <property type="entry name" value="S64756"/>
</dbReference>
<dbReference type="RefSeq" id="NP_013087.1">
    <property type="nucleotide sequence ID" value="NM_001181834.1"/>
</dbReference>
<dbReference type="PDB" id="6WB9">
    <property type="method" value="EM"/>
    <property type="resolution" value="3.00 A"/>
    <property type="chains" value="6=1-108"/>
</dbReference>
<dbReference type="PDB" id="7KRA">
    <property type="method" value="EM"/>
    <property type="resolution" value="3.20 A"/>
    <property type="chains" value="F=1-108"/>
</dbReference>
<dbReference type="PDB" id="7KTX">
    <property type="method" value="EM"/>
    <property type="resolution" value="4.30 A"/>
    <property type="chains" value="F=1-108"/>
</dbReference>
<dbReference type="PDBsum" id="6WB9"/>
<dbReference type="PDBsum" id="7KRA"/>
<dbReference type="PDBsum" id="7KTX"/>
<dbReference type="EMDB" id="EMD-21587"/>
<dbReference type="EMDB" id="EMD-23003"/>
<dbReference type="EMDB" id="EMD-23033"/>
<dbReference type="SMR" id="Q12431"/>
<dbReference type="BioGRID" id="31237">
    <property type="interactions" value="257"/>
</dbReference>
<dbReference type="ComplexPortal" id="CPX-307">
    <property type="entry name" value="Endoplasmic Reticulum Membrane Complex"/>
</dbReference>
<dbReference type="DIP" id="DIP-988N"/>
<dbReference type="FunCoup" id="Q12431">
    <property type="interactions" value="47"/>
</dbReference>
<dbReference type="IntAct" id="Q12431">
    <property type="interactions" value="21"/>
</dbReference>
<dbReference type="STRING" id="4932.YLL014W"/>
<dbReference type="TCDB" id="3.A.27.1.2">
    <property type="family name" value="the endoplasmic reticulum membrane protein insertion complex (emc) family"/>
</dbReference>
<dbReference type="PaxDb" id="4932-YLL014W"/>
<dbReference type="PeptideAtlas" id="Q12431"/>
<dbReference type="EnsemblFungi" id="YLL014W_mRNA">
    <property type="protein sequence ID" value="YLL014W"/>
    <property type="gene ID" value="YLL014W"/>
</dbReference>
<dbReference type="GeneID" id="850646"/>
<dbReference type="KEGG" id="sce:YLL014W"/>
<dbReference type="AGR" id="SGD:S000003937"/>
<dbReference type="SGD" id="S000003937">
    <property type="gene designation" value="EMC6"/>
</dbReference>
<dbReference type="VEuPathDB" id="FungiDB:YLL014W"/>
<dbReference type="eggNOG" id="KOG4455">
    <property type="taxonomic scope" value="Eukaryota"/>
</dbReference>
<dbReference type="HOGENOM" id="CLU_110781_4_1_1"/>
<dbReference type="InParanoid" id="Q12431"/>
<dbReference type="OMA" id="YPGFLFY"/>
<dbReference type="OrthoDB" id="16510at2759"/>
<dbReference type="BioCyc" id="YEAST:G3O-32119-MONOMER"/>
<dbReference type="BioGRID-ORCS" id="850646">
    <property type="hits" value="7 hits in 10 CRISPR screens"/>
</dbReference>
<dbReference type="PRO" id="PR:Q12431"/>
<dbReference type="Proteomes" id="UP000002311">
    <property type="component" value="Chromosome XII"/>
</dbReference>
<dbReference type="RNAct" id="Q12431">
    <property type="molecule type" value="protein"/>
</dbReference>
<dbReference type="GO" id="GO:0072546">
    <property type="term" value="C:EMC complex"/>
    <property type="evidence" value="ECO:0000314"/>
    <property type="project" value="UniProtKB"/>
</dbReference>
<dbReference type="GO" id="GO:0005783">
    <property type="term" value="C:endoplasmic reticulum"/>
    <property type="evidence" value="ECO:0007005"/>
    <property type="project" value="SGD"/>
</dbReference>
<dbReference type="GO" id="GO:0000045">
    <property type="term" value="P:autophagosome assembly"/>
    <property type="evidence" value="ECO:0000318"/>
    <property type="project" value="GO_Central"/>
</dbReference>
<dbReference type="GO" id="GO:0006644">
    <property type="term" value="P:phospholipid metabolic process"/>
    <property type="evidence" value="ECO:0000314"/>
    <property type="project" value="ComplexPortal"/>
</dbReference>
<dbReference type="GO" id="GO:0015914">
    <property type="term" value="P:phospholipid transport"/>
    <property type="evidence" value="ECO:0000315"/>
    <property type="project" value="ComplexPortal"/>
</dbReference>
<dbReference type="GO" id="GO:0034975">
    <property type="term" value="P:protein folding in endoplasmic reticulum"/>
    <property type="evidence" value="ECO:0007003"/>
    <property type="project" value="SGD"/>
</dbReference>
<dbReference type="GO" id="GO:0045050">
    <property type="term" value="P:protein insertion into ER membrane by stop-transfer membrane-anchor sequence"/>
    <property type="evidence" value="ECO:0000315"/>
    <property type="project" value="UniProtKB"/>
</dbReference>
<dbReference type="InterPro" id="IPR008504">
    <property type="entry name" value="Emc6"/>
</dbReference>
<dbReference type="InterPro" id="IPR029008">
    <property type="entry name" value="EMC6-like"/>
</dbReference>
<dbReference type="PANTHER" id="PTHR20994">
    <property type="entry name" value="ER MEMBRANE PROTEIN COMPLEX SUBUNIT 6"/>
    <property type="match status" value="1"/>
</dbReference>
<dbReference type="PANTHER" id="PTHR20994:SF0">
    <property type="entry name" value="ER MEMBRANE PROTEIN COMPLEX SUBUNIT 6"/>
    <property type="match status" value="1"/>
</dbReference>
<dbReference type="Pfam" id="PF07019">
    <property type="entry name" value="EMC6"/>
    <property type="match status" value="1"/>
</dbReference>
<evidence type="ECO:0000250" key="1">
    <source>
        <dbReference type="UniProtKB" id="Q5J8M3"/>
    </source>
</evidence>
<evidence type="ECO:0000250" key="2">
    <source>
        <dbReference type="UniProtKB" id="Q9BV81"/>
    </source>
</evidence>
<evidence type="ECO:0000255" key="3"/>
<evidence type="ECO:0000269" key="4">
    <source>
    </source>
</evidence>
<evidence type="ECO:0000269" key="5">
    <source>
    </source>
</evidence>
<evidence type="ECO:0000305" key="6"/>
<evidence type="ECO:0007829" key="7">
    <source>
        <dbReference type="PDB" id="6WB9"/>
    </source>
</evidence>
<organism>
    <name type="scientific">Saccharomyces cerevisiae (strain ATCC 204508 / S288c)</name>
    <name type="common">Baker's yeast</name>
    <dbReference type="NCBI Taxonomy" id="559292"/>
    <lineage>
        <taxon>Eukaryota</taxon>
        <taxon>Fungi</taxon>
        <taxon>Dikarya</taxon>
        <taxon>Ascomycota</taxon>
        <taxon>Saccharomycotina</taxon>
        <taxon>Saccharomycetes</taxon>
        <taxon>Saccharomycetales</taxon>
        <taxon>Saccharomycetaceae</taxon>
        <taxon>Saccharomyces</taxon>
    </lineage>
</organism>
<feature type="chain" id="PRO_0000247112" description="ER membrane protein complex subunit 6">
    <location>
        <begin position="1"/>
        <end position="108"/>
    </location>
</feature>
<feature type="topological domain" description="Cytoplasmic" evidence="2">
    <location>
        <begin position="1"/>
        <end position="23"/>
    </location>
</feature>
<feature type="transmembrane region" description="Helical" evidence="3">
    <location>
        <begin position="24"/>
        <end position="44"/>
    </location>
</feature>
<feature type="topological domain" description="Lumenal" evidence="2">
    <location>
        <begin position="45"/>
        <end position="48"/>
    </location>
</feature>
<feature type="transmembrane region" description="Helical" evidence="3">
    <location>
        <begin position="49"/>
        <end position="69"/>
    </location>
</feature>
<feature type="topological domain" description="Cytoplasmic" evidence="6">
    <location>
        <begin position="70"/>
        <end position="87"/>
    </location>
</feature>
<feature type="transmembrane region" description="Helical" evidence="3">
    <location>
        <begin position="88"/>
        <end position="106"/>
    </location>
</feature>
<feature type="topological domain" description="Lumenal" evidence="2">
    <location>
        <begin position="107"/>
        <end position="108"/>
    </location>
</feature>
<feature type="helix" evidence="7">
    <location>
        <begin position="14"/>
        <end position="41"/>
    </location>
</feature>
<feature type="helix" evidence="7">
    <location>
        <begin position="46"/>
        <end position="67"/>
    </location>
</feature>
<feature type="turn" evidence="7">
    <location>
        <begin position="73"/>
        <end position="76"/>
    </location>
</feature>
<feature type="strand" evidence="7">
    <location>
        <begin position="77"/>
        <end position="79"/>
    </location>
</feature>
<feature type="helix" evidence="7">
    <location>
        <begin position="80"/>
        <end position="84"/>
    </location>
</feature>
<feature type="strand" evidence="7">
    <location>
        <begin position="86"/>
        <end position="88"/>
    </location>
</feature>
<feature type="helix" evidence="7">
    <location>
        <begin position="89"/>
        <end position="106"/>
    </location>
</feature>
<comment type="function">
    <text evidence="1 5">Part of the endoplasmic reticulum membrane protein complex (EMC) that enables the energy-independent insertion into endoplasmic reticulum membranes of newly synthesized membrane proteins (PubMed:29809151). Preferentially accommodates proteins with transmembrane domains that are weakly hydrophobic or contain destabilizing features such as charged and aromatic residues (PubMed:29809151). Involved in the cotranslational insertion of multi-pass membrane proteins in which stop-transfer membrane-anchor sequences become ER membrane spanning helices (PubMed:29809151). It is also required for the post-translational insertion of tail-anchored/TA proteins in endoplasmic reticulum membranes. By mediating the proper cotranslational insertion of N-terminal transmembrane domains in an N-exo topology, with translocated N-terminus in the lumen of the ER, controls the topology of multi-pass membrane proteins (By similarity).</text>
</comment>
<comment type="subunit">
    <text evidence="4 5">Component of the ER membrane protein complex (EMC), which is composed of EMC1, EMC2, EMC3, EMC4, EMC5 and EMC6.</text>
</comment>
<comment type="subcellular location">
    <subcellularLocation>
        <location evidence="2">Endoplasmic reticulum membrane</location>
        <topology evidence="2">Multi-pass membrane protein</topology>
    </subcellularLocation>
</comment>
<comment type="similarity">
    <text evidence="6">Belongs to the EMC6 family.</text>
</comment>
<accession>Q12431</accession>
<accession>D6VXY8</accession>